<reference key="1">
    <citation type="journal article" date="1997" name="DNA Res.">
        <title>Sequence analysis of the groESL-cotA region of the Bacillus subtilis genome, containing the restriction/modification system genes.</title>
        <authorList>
            <person name="Kasahara Y."/>
            <person name="Nakai S."/>
            <person name="Ogasawara N."/>
            <person name="Yata K."/>
            <person name="Sadaie Y."/>
        </authorList>
    </citation>
    <scope>NUCLEOTIDE SEQUENCE [GENOMIC DNA]</scope>
    <source>
        <strain>168 / Marburg / ATCC 6051 / DSM 10 / JCM 1465 / NBRC 13719 / NCIMB 3610 / NRRL NRS-744 / VKM B-501</strain>
    </source>
</reference>
<reference key="2">
    <citation type="journal article" date="1997" name="Nature">
        <title>The complete genome sequence of the Gram-positive bacterium Bacillus subtilis.</title>
        <authorList>
            <person name="Kunst F."/>
            <person name="Ogasawara N."/>
            <person name="Moszer I."/>
            <person name="Albertini A.M."/>
            <person name="Alloni G."/>
            <person name="Azevedo V."/>
            <person name="Bertero M.G."/>
            <person name="Bessieres P."/>
            <person name="Bolotin A."/>
            <person name="Borchert S."/>
            <person name="Borriss R."/>
            <person name="Boursier L."/>
            <person name="Brans A."/>
            <person name="Braun M."/>
            <person name="Brignell S.C."/>
            <person name="Bron S."/>
            <person name="Brouillet S."/>
            <person name="Bruschi C.V."/>
            <person name="Caldwell B."/>
            <person name="Capuano V."/>
            <person name="Carter N.M."/>
            <person name="Choi S.-K."/>
            <person name="Codani J.-J."/>
            <person name="Connerton I.F."/>
            <person name="Cummings N.J."/>
            <person name="Daniel R.A."/>
            <person name="Denizot F."/>
            <person name="Devine K.M."/>
            <person name="Duesterhoeft A."/>
            <person name="Ehrlich S.D."/>
            <person name="Emmerson P.T."/>
            <person name="Entian K.-D."/>
            <person name="Errington J."/>
            <person name="Fabret C."/>
            <person name="Ferrari E."/>
            <person name="Foulger D."/>
            <person name="Fritz C."/>
            <person name="Fujita M."/>
            <person name="Fujita Y."/>
            <person name="Fuma S."/>
            <person name="Galizzi A."/>
            <person name="Galleron N."/>
            <person name="Ghim S.-Y."/>
            <person name="Glaser P."/>
            <person name="Goffeau A."/>
            <person name="Golightly E.J."/>
            <person name="Grandi G."/>
            <person name="Guiseppi G."/>
            <person name="Guy B.J."/>
            <person name="Haga K."/>
            <person name="Haiech J."/>
            <person name="Harwood C.R."/>
            <person name="Henaut A."/>
            <person name="Hilbert H."/>
            <person name="Holsappel S."/>
            <person name="Hosono S."/>
            <person name="Hullo M.-F."/>
            <person name="Itaya M."/>
            <person name="Jones L.-M."/>
            <person name="Joris B."/>
            <person name="Karamata D."/>
            <person name="Kasahara Y."/>
            <person name="Klaerr-Blanchard M."/>
            <person name="Klein C."/>
            <person name="Kobayashi Y."/>
            <person name="Koetter P."/>
            <person name="Koningstein G."/>
            <person name="Krogh S."/>
            <person name="Kumano M."/>
            <person name="Kurita K."/>
            <person name="Lapidus A."/>
            <person name="Lardinois S."/>
            <person name="Lauber J."/>
            <person name="Lazarevic V."/>
            <person name="Lee S.-M."/>
            <person name="Levine A."/>
            <person name="Liu H."/>
            <person name="Masuda S."/>
            <person name="Mauel C."/>
            <person name="Medigue C."/>
            <person name="Medina N."/>
            <person name="Mellado R.P."/>
            <person name="Mizuno M."/>
            <person name="Moestl D."/>
            <person name="Nakai S."/>
            <person name="Noback M."/>
            <person name="Noone D."/>
            <person name="O'Reilly M."/>
            <person name="Ogawa K."/>
            <person name="Ogiwara A."/>
            <person name="Oudega B."/>
            <person name="Park S.-H."/>
            <person name="Parro V."/>
            <person name="Pohl T.M."/>
            <person name="Portetelle D."/>
            <person name="Porwollik S."/>
            <person name="Prescott A.M."/>
            <person name="Presecan E."/>
            <person name="Pujic P."/>
            <person name="Purnelle B."/>
            <person name="Rapoport G."/>
            <person name="Rey M."/>
            <person name="Reynolds S."/>
            <person name="Rieger M."/>
            <person name="Rivolta C."/>
            <person name="Rocha E."/>
            <person name="Roche B."/>
            <person name="Rose M."/>
            <person name="Sadaie Y."/>
            <person name="Sato T."/>
            <person name="Scanlan E."/>
            <person name="Schleich S."/>
            <person name="Schroeter R."/>
            <person name="Scoffone F."/>
            <person name="Sekiguchi J."/>
            <person name="Sekowska A."/>
            <person name="Seror S.J."/>
            <person name="Serror P."/>
            <person name="Shin B.-S."/>
            <person name="Soldo B."/>
            <person name="Sorokin A."/>
            <person name="Tacconi E."/>
            <person name="Takagi T."/>
            <person name="Takahashi H."/>
            <person name="Takemaru K."/>
            <person name="Takeuchi M."/>
            <person name="Tamakoshi A."/>
            <person name="Tanaka T."/>
            <person name="Terpstra P."/>
            <person name="Tognoni A."/>
            <person name="Tosato V."/>
            <person name="Uchiyama S."/>
            <person name="Vandenbol M."/>
            <person name="Vannier F."/>
            <person name="Vassarotti A."/>
            <person name="Viari A."/>
            <person name="Wambutt R."/>
            <person name="Wedler E."/>
            <person name="Wedler H."/>
            <person name="Weitzenegger T."/>
            <person name="Winters P."/>
            <person name="Wipat A."/>
            <person name="Yamamoto H."/>
            <person name="Yamane K."/>
            <person name="Yasumoto K."/>
            <person name="Yata K."/>
            <person name="Yoshida K."/>
            <person name="Yoshikawa H.-F."/>
            <person name="Zumstein E."/>
            <person name="Yoshikawa H."/>
            <person name="Danchin A."/>
        </authorList>
    </citation>
    <scope>NUCLEOTIDE SEQUENCE [LARGE SCALE GENOMIC DNA]</scope>
    <source>
        <strain>168</strain>
    </source>
</reference>
<reference key="3">
    <citation type="journal article" date="1988" name="Gene">
        <title>DNA methyltransferase of Bacillus subtilis Marburg: purification, properties and further evidence of specificity.</title>
        <authorList>
            <person name="Guha S."/>
        </authorList>
    </citation>
    <scope>FUNCTION</scope>
    <scope>ACTIVITY REGULATION</scope>
    <scope>BIOPHYSICOCHEMICAL PROPERTIES</scope>
    <scope>SUBUNIT</scope>
    <source>
        <strain>168 / Marburg / ATCC 6051 / DSM 10 / JCM 1465 / NBRC 13719 / NCIMB 3610 / NRRL NRS-744 / VKM B-501</strain>
    </source>
</reference>
<reference key="4">
    <citation type="journal article" date="1988" name="Mol. Gen. Genet.">
        <title>Restriction and modification in Bacillus subtilis Marburg 168: target sites and effects on plasmid transformation.</title>
        <authorList>
            <person name="Bron S."/>
            <person name="Janniere L."/>
            <person name="Ehrlich S.D."/>
        </authorList>
    </citation>
    <scope>DNA TARGET SEQUENCE</scope>
    <source>
        <strain>168 / Marburg / ATCC 6051 / DSM 10 / JCM 1465 / NBRC 13719 / NCIMB 3610 / NRRL NRS-744 / VKM B-501</strain>
    </source>
</reference>
<reference key="5">
    <citation type="journal article" date="2002" name="J. Bacteriol.">
        <title>Molecular organization of intrinsic restriction and modification genes BsuM of Bacillus subtilis Marburg.</title>
        <authorList>
            <person name="Ohshima H."/>
            <person name="Matsuoka S."/>
            <person name="Asai K."/>
            <person name="Sadaie Y."/>
        </authorList>
    </citation>
    <scope>FUNCTION</scope>
    <scope>DEVELOPMENTAL STAGE</scope>
    <scope>INDUCTION</scope>
    <scope>OPERON STRUCTURE</scope>
    <scope>DISRUPTION PHENOTYPE</scope>
    <source>
        <strain>168 / Marburg / ATCC 6051 / DSM 10 / JCM 1465 / NBRC 13719 / NCIMB 3610 / NRRL NRS-744 / VKM B-501</strain>
    </source>
</reference>
<reference key="6">
    <citation type="journal article" date="2003" name="Nucleic Acids Res.">
        <title>A nomenclature for restriction enzymes, DNA methyltransferases, homing endonucleases and their genes.</title>
        <authorList>
            <person name="Roberts R.J."/>
            <person name="Belfort M."/>
            <person name="Bestor T."/>
            <person name="Bhagwat A.S."/>
            <person name="Bickle T.A."/>
            <person name="Bitinaite J."/>
            <person name="Blumenthal R.M."/>
            <person name="Degtyarev S.K."/>
            <person name="Dryden D.T."/>
            <person name="Dybvig K."/>
            <person name="Firman K."/>
            <person name="Gromova E.S."/>
            <person name="Gumport R.I."/>
            <person name="Halford S.E."/>
            <person name="Hattman S."/>
            <person name="Heitman J."/>
            <person name="Hornby D.P."/>
            <person name="Janulaitis A."/>
            <person name="Jeltsch A."/>
            <person name="Josephsen J."/>
            <person name="Kiss A."/>
            <person name="Klaenhammer T.R."/>
            <person name="Kobayashi I."/>
            <person name="Kong H."/>
            <person name="Krueger D.H."/>
            <person name="Lacks S."/>
            <person name="Marinus M.G."/>
            <person name="Miyahara M."/>
            <person name="Morgan R.D."/>
            <person name="Murray N.E."/>
            <person name="Nagaraja V."/>
            <person name="Piekarowicz A."/>
            <person name="Pingoud A."/>
            <person name="Raleigh E."/>
            <person name="Rao D.N."/>
            <person name="Reich N."/>
            <person name="Repin V.E."/>
            <person name="Selker E.U."/>
            <person name="Shaw P.C."/>
            <person name="Stein D.C."/>
            <person name="Stoddard B.L."/>
            <person name="Szybalski W."/>
            <person name="Trautner T.A."/>
            <person name="Van Etten J.L."/>
            <person name="Vitor J.M."/>
            <person name="Wilson G.G."/>
            <person name="Xu S.Y."/>
        </authorList>
    </citation>
    <scope>NOMENCLATURE</scope>
</reference>
<reference key="7">
    <citation type="journal article" date="2020" name="Nucleic Acids Res.">
        <title>Methyltransferase DnmA is responsible for genome-wide N6-methyladenosine modifications at non-palindromic recognition sites in Bacillus subtilis.</title>
        <authorList>
            <person name="Nye T.M."/>
            <person name="van Gijtenbeek L.A."/>
            <person name="Stevens A.G."/>
            <person name="Schroeder J.W."/>
            <person name="Randall J.R."/>
            <person name="Matthews L.A."/>
            <person name="Simmons L.A."/>
        </authorList>
    </citation>
    <scope>FUNCTION</scope>
    <scope>DISRUPTION PHENOTYPE</scope>
    <source>
        <strain>168 / PY79</strain>
    </source>
</reference>
<accession>O34680</accession>
<accession>Q797D0</accession>
<name>YDIP_BACSU</name>
<gene>
    <name type="primary">ydiP</name>
    <name type="ordered locus">BSU06070</name>
</gene>
<comment type="function">
    <text evidence="3 4 5">A methylase, recognizes the double-stranded sequence 5'-YTCGAR-3', methylates C-3 on both strands, and protects the DNA from cleavage by the BsuMI endonuclease.</text>
</comment>
<comment type="catalytic activity">
    <reaction evidence="2">
        <text>a 2'-deoxycytidine in DNA + S-adenosyl-L-methionine = a 5-methyl-2'-deoxycytidine in DNA + S-adenosyl-L-homocysteine + H(+)</text>
        <dbReference type="Rhea" id="RHEA:13681"/>
        <dbReference type="Rhea" id="RHEA-COMP:11369"/>
        <dbReference type="Rhea" id="RHEA-COMP:11370"/>
        <dbReference type="ChEBI" id="CHEBI:15378"/>
        <dbReference type="ChEBI" id="CHEBI:57856"/>
        <dbReference type="ChEBI" id="CHEBI:59789"/>
        <dbReference type="ChEBI" id="CHEBI:85452"/>
        <dbReference type="ChEBI" id="CHEBI:85454"/>
        <dbReference type="EC" id="2.1.1.37"/>
    </reaction>
</comment>
<comment type="activity regulation">
    <text evidence="4">Somewhat inhibited by MgCl(2) and spermidine, strongly inhibited by MnCl(2).</text>
</comment>
<comment type="biophysicochemical properties">
    <kinetics>
        <KM evidence="4">0.6 uM for S-adenosyl-L-methionine</KM>
        <KM evidence="4">3 nM for DNA</KM>
    </kinetics>
    <phDependence>
        <text evidence="4">Optimum pH is 8.0.</text>
    </phDependence>
    <temperatureDependence>
        <text evidence="4">Rapidly loses activity at 37 degrees Celsius in the absence of DNA.</text>
    </temperatureDependence>
</comment>
<comment type="subunit">
    <text evidence="4 7">Monomer (PubMed:3150363). May form a complex with YdiP, also seems to be active alone (Probable).</text>
</comment>
<comment type="developmental stage">
    <text evidence="3">Not expressed during sporulation.</text>
</comment>
<comment type="induction">
    <text evidence="3">Constitutively expressed during exponential growth. Encoded in an operon with ydiO and in a second with groES, groEL, ydiM and ydiN. This second operon is heat-inducible.</text>
</comment>
<comment type="disruption phenotype">
    <text evidence="3 5">Essential for growth, it can be disrupted once one of the components of the corresponding BsuMI restriction endonuclease complex (AC O34303, O34885, O35025, YdjA, YdiS and YdiR respectively) has been disrupted (PubMed:11751814). Triple deletions ydiO-ydiP-ydiR, ydiO-ydiP-ydiS and ydiO-ydiP-ydjA lead to loss of susceptibility to MspJI, which only digests C-methylated DNA (PubMed:32324221).</text>
</comment>
<comment type="similarity">
    <text evidence="1">Belongs to the class I-like SAM-binding methyltransferase superfamily. C5-methyltransferase family.</text>
</comment>
<comment type="caution">
    <text evidence="8">The characterized enzyme was reported to be a monomer of approximately 45 kDa; it is not clear whether this corresponds to YdiO, YdiP or to another activity altogether.</text>
</comment>
<evidence type="ECO:0000255" key="1">
    <source>
        <dbReference type="PROSITE-ProRule" id="PRU01016"/>
    </source>
</evidence>
<evidence type="ECO:0000255" key="2">
    <source>
        <dbReference type="PROSITE-ProRule" id="PRU10018"/>
    </source>
</evidence>
<evidence type="ECO:0000269" key="3">
    <source>
    </source>
</evidence>
<evidence type="ECO:0000269" key="4">
    <source>
    </source>
</evidence>
<evidence type="ECO:0000269" key="5">
    <source>
    </source>
</evidence>
<evidence type="ECO:0000303" key="6">
    <source>
    </source>
</evidence>
<evidence type="ECO:0000305" key="7">
    <source>
    </source>
</evidence>
<evidence type="ECO:0000305" key="8">
    <source>
    </source>
</evidence>
<sequence>MKVVSLFSGIGGIELGLHQSGHTTEIFCEVDPLAKAVLSKNFPGVKIEDDINEIRELPSCDLVAAGFPCQDLSQAGGKEGIDGSRSGLVKKLFELIEKKEHANRPPWILIENVPYMLRLNRGKAMSYLTSVLSELGYTWAYRTVDARCFGLPQRRHRVILLASLFEDPKDVIFSQDHSEPDLDGKPSVVDHSNYYGFYWTEGLRGVGWAREAVPPIKCGSSVGIASPPAVWSPYEDIVGTINIRDAERLQGFPEDWTNITTETGKDIKEGARWRLVGNAVSVRVSKWIGENLSQPKGSISDFEGELVTKTWPSAAWGYGDKKYKVPVSKWVANTEQIAISEFLNHPLKPLSARALNGFLGRAARCTNVNYSDEFINSLERCKDRQLQKV</sequence>
<organism>
    <name type="scientific">Bacillus subtilis (strain 168)</name>
    <dbReference type="NCBI Taxonomy" id="224308"/>
    <lineage>
        <taxon>Bacteria</taxon>
        <taxon>Bacillati</taxon>
        <taxon>Bacillota</taxon>
        <taxon>Bacilli</taxon>
        <taxon>Bacillales</taxon>
        <taxon>Bacillaceae</taxon>
        <taxon>Bacillus</taxon>
    </lineage>
</organism>
<proteinExistence type="evidence at protein level"/>
<keyword id="KW-0489">Methyltransferase</keyword>
<keyword id="KW-1185">Reference proteome</keyword>
<keyword id="KW-0680">Restriction system</keyword>
<keyword id="KW-0949">S-adenosyl-L-methionine</keyword>
<keyword id="KW-0808">Transferase</keyword>
<dbReference type="EC" id="2.1.1.37"/>
<dbReference type="EMBL" id="AB007637">
    <property type="protein sequence ID" value="BAA22751.1"/>
    <property type="molecule type" value="Genomic_DNA"/>
</dbReference>
<dbReference type="EMBL" id="AL009126">
    <property type="protein sequence ID" value="CAB12426.1"/>
    <property type="molecule type" value="Genomic_DNA"/>
</dbReference>
<dbReference type="PIR" id="A69788">
    <property type="entry name" value="A69788"/>
</dbReference>
<dbReference type="RefSeq" id="WP_003242904.1">
    <property type="nucleotide sequence ID" value="NZ_OZ025638.1"/>
</dbReference>
<dbReference type="SMR" id="O34680"/>
<dbReference type="FunCoup" id="O34680">
    <property type="interactions" value="51"/>
</dbReference>
<dbReference type="STRING" id="224308.BSU06070"/>
<dbReference type="REBASE" id="152750">
    <property type="entry name" value="M.Rsp324ORF1111P"/>
</dbReference>
<dbReference type="REBASE" id="152763">
    <property type="entry name" value="M.Rsp541ORF1071P"/>
</dbReference>
<dbReference type="REBASE" id="152771">
    <property type="entry name" value="M.Rsp941ORF1071P"/>
</dbReference>
<dbReference type="REBASE" id="156236">
    <property type="entry name" value="M2.Bsu16045ORF661P"/>
</dbReference>
<dbReference type="REBASE" id="166488">
    <property type="entry name" value="M.Nse506ORF862P"/>
</dbReference>
<dbReference type="REBASE" id="203183">
    <property type="entry name" value="M.Bam1267ORF1949P"/>
</dbReference>
<dbReference type="REBASE" id="251329">
    <property type="entry name" value="M2.BliADL4ORF1556P"/>
</dbReference>
<dbReference type="REBASE" id="3613">
    <property type="entry name" value="M2.BsuMI"/>
</dbReference>
<dbReference type="PaxDb" id="224308-BSU06070"/>
<dbReference type="EnsemblBacteria" id="CAB12426">
    <property type="protein sequence ID" value="CAB12426"/>
    <property type="gene ID" value="BSU_06070"/>
</dbReference>
<dbReference type="GeneID" id="939876"/>
<dbReference type="KEGG" id="bsu:BSU06070"/>
<dbReference type="PATRIC" id="fig|224308.43.peg.637"/>
<dbReference type="eggNOG" id="COG0270">
    <property type="taxonomic scope" value="Bacteria"/>
</dbReference>
<dbReference type="InParanoid" id="O34680"/>
<dbReference type="OrthoDB" id="9813719at2"/>
<dbReference type="PhylomeDB" id="O34680"/>
<dbReference type="BioCyc" id="BSUB:BSU06070-MONOMER"/>
<dbReference type="PRO" id="PR:O34680"/>
<dbReference type="Proteomes" id="UP000001570">
    <property type="component" value="Chromosome"/>
</dbReference>
<dbReference type="GO" id="GO:0003886">
    <property type="term" value="F:DNA (cytosine-5-)-methyltransferase activity"/>
    <property type="evidence" value="ECO:0007669"/>
    <property type="project" value="UniProtKB-EC"/>
</dbReference>
<dbReference type="GO" id="GO:0009007">
    <property type="term" value="F:site-specific DNA-methyltransferase (adenine-specific) activity"/>
    <property type="evidence" value="ECO:0000303"/>
    <property type="project" value="UniProtKB"/>
</dbReference>
<dbReference type="GO" id="GO:0009307">
    <property type="term" value="P:DNA restriction-modification system"/>
    <property type="evidence" value="ECO:0000315"/>
    <property type="project" value="UniProtKB"/>
</dbReference>
<dbReference type="GO" id="GO:0032259">
    <property type="term" value="P:methylation"/>
    <property type="evidence" value="ECO:0007669"/>
    <property type="project" value="UniProtKB-KW"/>
</dbReference>
<dbReference type="Gene3D" id="3.40.50.150">
    <property type="entry name" value="Vaccinia Virus protein VP39"/>
    <property type="match status" value="1"/>
</dbReference>
<dbReference type="InterPro" id="IPR050390">
    <property type="entry name" value="C5-Methyltransferase"/>
</dbReference>
<dbReference type="InterPro" id="IPR018117">
    <property type="entry name" value="C5_DNA_meth_AS"/>
</dbReference>
<dbReference type="InterPro" id="IPR001525">
    <property type="entry name" value="C5_MeTfrase"/>
</dbReference>
<dbReference type="InterPro" id="IPR031303">
    <property type="entry name" value="C5_meth_CS"/>
</dbReference>
<dbReference type="InterPro" id="IPR029063">
    <property type="entry name" value="SAM-dependent_MTases_sf"/>
</dbReference>
<dbReference type="NCBIfam" id="TIGR00675">
    <property type="entry name" value="dcm"/>
    <property type="match status" value="1"/>
</dbReference>
<dbReference type="PANTHER" id="PTHR10629">
    <property type="entry name" value="CYTOSINE-SPECIFIC METHYLTRANSFERASE"/>
    <property type="match status" value="1"/>
</dbReference>
<dbReference type="PANTHER" id="PTHR10629:SF50">
    <property type="entry name" value="DNA (CYTOSINE-5)-METHYLTRANSFERASE CMT3"/>
    <property type="match status" value="1"/>
</dbReference>
<dbReference type="Pfam" id="PF00145">
    <property type="entry name" value="DNA_methylase"/>
    <property type="match status" value="1"/>
</dbReference>
<dbReference type="PRINTS" id="PR00105">
    <property type="entry name" value="C5METTRFRASE"/>
</dbReference>
<dbReference type="SUPFAM" id="SSF53335">
    <property type="entry name" value="S-adenosyl-L-methionine-dependent methyltransferases"/>
    <property type="match status" value="1"/>
</dbReference>
<dbReference type="PROSITE" id="PS00094">
    <property type="entry name" value="C5_MTASE_1"/>
    <property type="match status" value="1"/>
</dbReference>
<dbReference type="PROSITE" id="PS00095">
    <property type="entry name" value="C5_MTASE_2"/>
    <property type="match status" value="1"/>
</dbReference>
<dbReference type="PROSITE" id="PS51679">
    <property type="entry name" value="SAM_MT_C5"/>
    <property type="match status" value="1"/>
</dbReference>
<feature type="chain" id="PRO_0000379885" description="Type II methyltransferase M2.BsuMI">
    <location>
        <begin position="1"/>
        <end position="389"/>
    </location>
</feature>
<feature type="domain" description="SAM-dependent MTase C5-type" evidence="1">
    <location>
        <begin position="1"/>
        <end position="299"/>
    </location>
</feature>
<feature type="active site" evidence="1 2">
    <location>
        <position position="69"/>
    </location>
</feature>
<protein>
    <recommendedName>
        <fullName evidence="6">Type II methyltransferase M2.BsuMI</fullName>
        <shortName evidence="6">M2.BsuMI</shortName>
        <ecNumber>2.1.1.37</ecNumber>
    </recommendedName>
    <alternativeName>
        <fullName>BsuMI modification methylase subunit YdiP</fullName>
    </alternativeName>
    <alternativeName>
        <fullName>Cytosine-specific methyltransferase M2.BsuMI</fullName>
    </alternativeName>
</protein>